<dbReference type="EMBL" id="AY037150">
    <property type="protein sequence ID" value="AAK67631.1"/>
    <property type="molecule type" value="mRNA"/>
</dbReference>
<dbReference type="EMBL" id="AY116620">
    <property type="protein sequence ID" value="AAM76789.1"/>
    <property type="molecule type" value="mRNA"/>
</dbReference>
<dbReference type="EMBL" id="AK074112">
    <property type="protein sequence ID" value="BAB84938.1"/>
    <property type="status" value="ALT_INIT"/>
    <property type="molecule type" value="mRNA"/>
</dbReference>
<dbReference type="EMBL" id="AK056120">
    <property type="status" value="NOT_ANNOTATED_CDS"/>
    <property type="molecule type" value="mRNA"/>
</dbReference>
<dbReference type="EMBL" id="AK027770">
    <property type="protein sequence ID" value="BAG51376.1"/>
    <property type="molecule type" value="mRNA"/>
</dbReference>
<dbReference type="EMBL" id="AK292268">
    <property type="protein sequence ID" value="BAF84957.1"/>
    <property type="molecule type" value="mRNA"/>
</dbReference>
<dbReference type="EMBL" id="AL391244">
    <property type="status" value="NOT_ANNOTATED_CDS"/>
    <property type="molecule type" value="Genomic_DNA"/>
</dbReference>
<dbReference type="EMBL" id="CR628411">
    <property type="status" value="NOT_ANNOTATED_CDS"/>
    <property type="molecule type" value="Genomic_DNA"/>
</dbReference>
<dbReference type="EMBL" id="CH471183">
    <property type="protein sequence ID" value="EAW56213.1"/>
    <property type="molecule type" value="Genomic_DNA"/>
</dbReference>
<dbReference type="EMBL" id="CH471183">
    <property type="protein sequence ID" value="EAW56215.1"/>
    <property type="molecule type" value="Genomic_DNA"/>
</dbReference>
<dbReference type="EMBL" id="CH471183">
    <property type="protein sequence ID" value="EAW56216.1"/>
    <property type="molecule type" value="Genomic_DNA"/>
</dbReference>
<dbReference type="EMBL" id="CH471183">
    <property type="protein sequence ID" value="EAW56217.1"/>
    <property type="molecule type" value="Genomic_DNA"/>
</dbReference>
<dbReference type="EMBL" id="BC016333">
    <property type="protein sequence ID" value="AAH16333.1"/>
    <property type="molecule type" value="mRNA"/>
</dbReference>
<dbReference type="EMBL" id="BC071622">
    <property type="protein sequence ID" value="AAH71622.2"/>
    <property type="status" value="ALT_INIT"/>
    <property type="molecule type" value="mRNA"/>
</dbReference>
<dbReference type="EMBL" id="AL834432">
    <property type="protein sequence ID" value="CAD39092.1"/>
    <property type="molecule type" value="mRNA"/>
</dbReference>
<dbReference type="EMBL" id="AL834441">
    <property type="protein sequence ID" value="CAD39101.1"/>
    <property type="molecule type" value="mRNA"/>
</dbReference>
<dbReference type="EMBL" id="AF087903">
    <property type="protein sequence ID" value="AAP97201.1"/>
    <property type="molecule type" value="mRNA"/>
</dbReference>
<dbReference type="CCDS" id="CCDS30557.1">
    <molecule id="Q96S94-1"/>
</dbReference>
<dbReference type="CCDS" id="CCDS30558.1">
    <molecule id="Q96S94-5"/>
</dbReference>
<dbReference type="RefSeq" id="NP_001034666.1">
    <molecule id="Q96S94-5"/>
    <property type="nucleotide sequence ID" value="NM_001039577.5"/>
</dbReference>
<dbReference type="RefSeq" id="NP_001307082.1">
    <molecule id="Q96S94-3"/>
    <property type="nucleotide sequence ID" value="NM_001320153.3"/>
</dbReference>
<dbReference type="RefSeq" id="NP_001307084.1">
    <molecule id="Q96S94-3"/>
    <property type="nucleotide sequence ID" value="NM_001320155.3"/>
</dbReference>
<dbReference type="RefSeq" id="NP_001337426.1">
    <molecule id="Q96S94-3"/>
    <property type="nucleotide sequence ID" value="NM_001350497.2"/>
</dbReference>
<dbReference type="RefSeq" id="NP_001337427.1">
    <molecule id="Q96S94-3"/>
    <property type="nucleotide sequence ID" value="NM_001350498.2"/>
</dbReference>
<dbReference type="RefSeq" id="NP_112199.2">
    <molecule id="Q96S94-1"/>
    <property type="nucleotide sequence ID" value="NM_030937.6"/>
</dbReference>
<dbReference type="RefSeq" id="XP_011540523.1">
    <property type="nucleotide sequence ID" value="XM_011542221.2"/>
</dbReference>
<dbReference type="RefSeq" id="XP_016857911.1">
    <property type="nucleotide sequence ID" value="XM_017002422.1"/>
</dbReference>
<dbReference type="RefSeq" id="XP_054194902.1">
    <molecule id="Q96S94-1"/>
    <property type="nucleotide sequence ID" value="XM_054338927.1"/>
</dbReference>
<dbReference type="SMR" id="Q96S94"/>
<dbReference type="BioGRID" id="123566">
    <property type="interactions" value="102"/>
</dbReference>
<dbReference type="ComplexPortal" id="CPX-343">
    <property type="entry name" value="Cyclin L2-CDK11A(p110) complex"/>
</dbReference>
<dbReference type="ComplexPortal" id="CPX-345">
    <property type="entry name" value="Cyclin L2-CDK11B(p58) complex"/>
</dbReference>
<dbReference type="ComplexPortal" id="CPX-347">
    <property type="entry name" value="Cyclin L2-CDK11A(p58) complex"/>
</dbReference>
<dbReference type="ComplexPortal" id="CPX-349">
    <property type="entry name" value="Cyclin L2-CDK11B(p110) complex"/>
</dbReference>
<dbReference type="FunCoup" id="Q96S94">
    <property type="interactions" value="3567"/>
</dbReference>
<dbReference type="IntAct" id="Q96S94">
    <property type="interactions" value="71"/>
</dbReference>
<dbReference type="MINT" id="Q96S94"/>
<dbReference type="STRING" id="9606.ENSP00000383611"/>
<dbReference type="ChEMBL" id="CHEMBL5483186"/>
<dbReference type="ChEMBL" id="CHEMBL5483187"/>
<dbReference type="ChEMBL" id="CHEMBL5483188"/>
<dbReference type="GlyCosmos" id="Q96S94">
    <property type="glycosylation" value="1 site, 1 glycan"/>
</dbReference>
<dbReference type="GlyGen" id="Q96S94">
    <property type="glycosylation" value="1 site, 1 O-linked glycan (1 site)"/>
</dbReference>
<dbReference type="iPTMnet" id="Q96S94"/>
<dbReference type="PhosphoSitePlus" id="Q96S94"/>
<dbReference type="BioMuta" id="CCNL2"/>
<dbReference type="DMDM" id="74752124"/>
<dbReference type="jPOST" id="Q96S94"/>
<dbReference type="MassIVE" id="Q96S94"/>
<dbReference type="PaxDb" id="9606-ENSP00000383611"/>
<dbReference type="PeptideAtlas" id="Q96S94"/>
<dbReference type="ProteomicsDB" id="23998"/>
<dbReference type="ProteomicsDB" id="78087">
    <molecule id="Q96S94-1"/>
</dbReference>
<dbReference type="ProteomicsDB" id="78088">
    <molecule id="Q96S94-2"/>
</dbReference>
<dbReference type="ProteomicsDB" id="78089">
    <molecule id="Q96S94-3"/>
</dbReference>
<dbReference type="Pumba" id="Q96S94"/>
<dbReference type="TopDownProteomics" id="Q96S94-1">
    <molecule id="Q96S94-1"/>
</dbReference>
<dbReference type="Antibodypedia" id="26320">
    <property type="antibodies" value="130 antibodies from 26 providers"/>
</dbReference>
<dbReference type="DNASU" id="81669"/>
<dbReference type="Ensembl" id="ENST00000400809.8">
    <molecule id="Q96S94-1"/>
    <property type="protein sequence ID" value="ENSP00000383611.3"/>
    <property type="gene ID" value="ENSG00000221978.13"/>
</dbReference>
<dbReference type="Ensembl" id="ENST00000408918.8">
    <molecule id="Q96S94-5"/>
    <property type="protein sequence ID" value="ENSP00000386158.4"/>
    <property type="gene ID" value="ENSG00000221978.13"/>
</dbReference>
<dbReference type="Ensembl" id="ENST00000481223.6">
    <molecule id="Q96S94-4"/>
    <property type="protein sequence ID" value="ENSP00000423734.1"/>
    <property type="gene ID" value="ENSG00000221978.13"/>
</dbReference>
<dbReference type="Ensembl" id="ENST00000488340.5">
    <molecule id="Q96S94-2"/>
    <property type="protein sequence ID" value="ENSP00000424647.1"/>
    <property type="gene ID" value="ENSG00000221978.13"/>
</dbReference>
<dbReference type="GeneID" id="81669"/>
<dbReference type="KEGG" id="hsa:81669"/>
<dbReference type="MANE-Select" id="ENST00000400809.8">
    <property type="protein sequence ID" value="ENSP00000383611.3"/>
    <property type="RefSeq nucleotide sequence ID" value="NM_030937.6"/>
    <property type="RefSeq protein sequence ID" value="NP_112199.2"/>
</dbReference>
<dbReference type="UCSC" id="uc001afi.3">
    <molecule id="Q96S94-1"/>
    <property type="organism name" value="human"/>
</dbReference>
<dbReference type="UCSC" id="uc057beg.1">
    <property type="organism name" value="human"/>
</dbReference>
<dbReference type="AGR" id="HGNC:20570"/>
<dbReference type="CTD" id="81669"/>
<dbReference type="DisGeNET" id="81669"/>
<dbReference type="GeneCards" id="CCNL2"/>
<dbReference type="HGNC" id="HGNC:20570">
    <property type="gene designation" value="CCNL2"/>
</dbReference>
<dbReference type="HPA" id="ENSG00000221978">
    <property type="expression patterns" value="Low tissue specificity"/>
</dbReference>
<dbReference type="MIM" id="613482">
    <property type="type" value="gene"/>
</dbReference>
<dbReference type="neXtProt" id="NX_Q96S94"/>
<dbReference type="OpenTargets" id="ENSG00000221978"/>
<dbReference type="PharmGKB" id="PA134973681"/>
<dbReference type="VEuPathDB" id="HostDB:ENSG00000221978"/>
<dbReference type="eggNOG" id="KOG0835">
    <property type="taxonomic scope" value="Eukaryota"/>
</dbReference>
<dbReference type="GeneTree" id="ENSGT00940000159239"/>
<dbReference type="HOGENOM" id="CLU_022000_6_1_1"/>
<dbReference type="InParanoid" id="Q96S94"/>
<dbReference type="OMA" id="NYEEVML"/>
<dbReference type="OrthoDB" id="10264655at2759"/>
<dbReference type="PAN-GO" id="Q96S94">
    <property type="GO annotations" value="3 GO annotations based on evolutionary models"/>
</dbReference>
<dbReference type="PhylomeDB" id="Q96S94"/>
<dbReference type="TreeFam" id="TF101011"/>
<dbReference type="PathwayCommons" id="Q96S94"/>
<dbReference type="SignaLink" id="Q96S94"/>
<dbReference type="SIGNOR" id="Q96S94"/>
<dbReference type="BioGRID-ORCS" id="81669">
    <property type="hits" value="40 hits in 1168 CRISPR screens"/>
</dbReference>
<dbReference type="CD-CODE" id="804901D1">
    <property type="entry name" value="Nuclear speckle"/>
</dbReference>
<dbReference type="ChiTaRS" id="CCNL2">
    <property type="organism name" value="human"/>
</dbReference>
<dbReference type="GeneWiki" id="CCNL2"/>
<dbReference type="GenomeRNAi" id="81669"/>
<dbReference type="Pharos" id="Q96S94">
    <property type="development level" value="Tbio"/>
</dbReference>
<dbReference type="PRO" id="PR:Q96S94"/>
<dbReference type="Proteomes" id="UP000005640">
    <property type="component" value="Chromosome 1"/>
</dbReference>
<dbReference type="RNAct" id="Q96S94">
    <property type="molecule type" value="protein"/>
</dbReference>
<dbReference type="Bgee" id="ENSG00000221978">
    <property type="expression patterns" value="Expressed in right uterine tube and 183 other cell types or tissues"/>
</dbReference>
<dbReference type="ExpressionAtlas" id="Q96S94">
    <property type="expression patterns" value="baseline and differential"/>
</dbReference>
<dbReference type="GO" id="GO:0000307">
    <property type="term" value="C:cyclin-dependent protein kinase holoenzyme complex"/>
    <property type="evidence" value="ECO:0000353"/>
    <property type="project" value="ComplexPortal"/>
</dbReference>
<dbReference type="GO" id="GO:0043231">
    <property type="term" value="C:intracellular membrane-bounded organelle"/>
    <property type="evidence" value="ECO:0000314"/>
    <property type="project" value="HPA"/>
</dbReference>
<dbReference type="GO" id="GO:0016607">
    <property type="term" value="C:nuclear speck"/>
    <property type="evidence" value="ECO:0007669"/>
    <property type="project" value="UniProtKB-SubCell"/>
</dbReference>
<dbReference type="GO" id="GO:0005654">
    <property type="term" value="C:nucleoplasm"/>
    <property type="evidence" value="ECO:0000314"/>
    <property type="project" value="HPA"/>
</dbReference>
<dbReference type="GO" id="GO:0005634">
    <property type="term" value="C:nucleus"/>
    <property type="evidence" value="ECO:0000314"/>
    <property type="project" value="MGI"/>
</dbReference>
<dbReference type="GO" id="GO:0016538">
    <property type="term" value="F:cyclin-dependent protein serine/threonine kinase regulator activity"/>
    <property type="evidence" value="ECO:0000318"/>
    <property type="project" value="GO_Central"/>
</dbReference>
<dbReference type="GO" id="GO:0042981">
    <property type="term" value="P:regulation of apoptotic process"/>
    <property type="evidence" value="ECO:0000303"/>
    <property type="project" value="ComplexPortal"/>
</dbReference>
<dbReference type="GO" id="GO:0051726">
    <property type="term" value="P:regulation of cell cycle"/>
    <property type="evidence" value="ECO:0000303"/>
    <property type="project" value="ComplexPortal"/>
</dbReference>
<dbReference type="GO" id="GO:0046605">
    <property type="term" value="P:regulation of centrosome cycle"/>
    <property type="evidence" value="ECO:0000303"/>
    <property type="project" value="ComplexPortal"/>
</dbReference>
<dbReference type="GO" id="GO:0043484">
    <property type="term" value="P:regulation of RNA splicing"/>
    <property type="evidence" value="ECO:0000314"/>
    <property type="project" value="ComplexPortal"/>
</dbReference>
<dbReference type="GO" id="GO:0006357">
    <property type="term" value="P:regulation of transcription by RNA polymerase II"/>
    <property type="evidence" value="ECO:0007669"/>
    <property type="project" value="InterPro"/>
</dbReference>
<dbReference type="CDD" id="cd20590">
    <property type="entry name" value="CYCLIN_CCNL2_rpt1"/>
    <property type="match status" value="1"/>
</dbReference>
<dbReference type="CDD" id="cd20593">
    <property type="entry name" value="CYCLIN_CCNL2_rpt2"/>
    <property type="match status" value="1"/>
</dbReference>
<dbReference type="FunFam" id="1.10.472.10:FF:000014">
    <property type="entry name" value="cyclin-L1 isoform X1"/>
    <property type="match status" value="1"/>
</dbReference>
<dbReference type="FunFam" id="1.10.472.10:FF:000016">
    <property type="entry name" value="cyclin-L1 isoform X1"/>
    <property type="match status" value="1"/>
</dbReference>
<dbReference type="Gene3D" id="1.10.472.10">
    <property type="entry name" value="Cyclin-like"/>
    <property type="match status" value="2"/>
</dbReference>
<dbReference type="InterPro" id="IPR013763">
    <property type="entry name" value="Cyclin-like_dom"/>
</dbReference>
<dbReference type="InterPro" id="IPR036915">
    <property type="entry name" value="Cyclin-like_sf"/>
</dbReference>
<dbReference type="InterPro" id="IPR043198">
    <property type="entry name" value="Cyclin/Ssn8"/>
</dbReference>
<dbReference type="InterPro" id="IPR004367">
    <property type="entry name" value="Cyclin_C-dom"/>
</dbReference>
<dbReference type="InterPro" id="IPR006671">
    <property type="entry name" value="Cyclin_N"/>
</dbReference>
<dbReference type="PANTHER" id="PTHR10026">
    <property type="entry name" value="CYCLIN"/>
    <property type="match status" value="1"/>
</dbReference>
<dbReference type="Pfam" id="PF02984">
    <property type="entry name" value="Cyclin_C"/>
    <property type="match status" value="1"/>
</dbReference>
<dbReference type="Pfam" id="PF00134">
    <property type="entry name" value="Cyclin_N"/>
    <property type="match status" value="1"/>
</dbReference>
<dbReference type="PIRSF" id="PIRSF036580">
    <property type="entry name" value="Cyclin_L"/>
    <property type="match status" value="1"/>
</dbReference>
<dbReference type="SMART" id="SM00385">
    <property type="entry name" value="CYCLIN"/>
    <property type="match status" value="2"/>
</dbReference>
<dbReference type="SMART" id="SM01332">
    <property type="entry name" value="Cyclin_C"/>
    <property type="match status" value="1"/>
</dbReference>
<dbReference type="SUPFAM" id="SSF47954">
    <property type="entry name" value="Cyclin-like"/>
    <property type="match status" value="2"/>
</dbReference>
<evidence type="ECO:0000250" key="1"/>
<evidence type="ECO:0000256" key="2">
    <source>
        <dbReference type="SAM" id="MobiDB-lite"/>
    </source>
</evidence>
<evidence type="ECO:0000269" key="3">
    <source>
    </source>
</evidence>
<evidence type="ECO:0000269" key="4">
    <source>
    </source>
</evidence>
<evidence type="ECO:0000303" key="5">
    <source>
    </source>
</evidence>
<evidence type="ECO:0000303" key="6">
    <source>
    </source>
</evidence>
<evidence type="ECO:0000303" key="7">
    <source>
    </source>
</evidence>
<evidence type="ECO:0000303" key="8">
    <source>
    </source>
</evidence>
<evidence type="ECO:0000303" key="9">
    <source ref="2"/>
</evidence>
<evidence type="ECO:0000305" key="10"/>
<evidence type="ECO:0007744" key="11">
    <source>
    </source>
</evidence>
<evidence type="ECO:0007744" key="12">
    <source>
    </source>
</evidence>
<evidence type="ECO:0007744" key="13">
    <source>
    </source>
</evidence>
<evidence type="ECO:0007744" key="14">
    <source>
    </source>
</evidence>
<evidence type="ECO:0007744" key="15">
    <source>
    </source>
</evidence>
<evidence type="ECO:0007744" key="16">
    <source>
    </source>
</evidence>
<evidence type="ECO:0007744" key="17">
    <source>
    </source>
</evidence>
<keyword id="KW-0007">Acetylation</keyword>
<keyword id="KW-0025">Alternative splicing</keyword>
<keyword id="KW-0195">Cyclin</keyword>
<keyword id="KW-0539">Nucleus</keyword>
<keyword id="KW-0597">Phosphoprotein</keyword>
<keyword id="KW-1267">Proteomics identification</keyword>
<keyword id="KW-1185">Reference proteome</keyword>
<keyword id="KW-0677">Repeat</keyword>
<keyword id="KW-0804">Transcription</keyword>
<keyword id="KW-0805">Transcription regulation</keyword>
<organism>
    <name type="scientific">Homo sapiens</name>
    <name type="common">Human</name>
    <dbReference type="NCBI Taxonomy" id="9606"/>
    <lineage>
        <taxon>Eukaryota</taxon>
        <taxon>Metazoa</taxon>
        <taxon>Chordata</taxon>
        <taxon>Craniata</taxon>
        <taxon>Vertebrata</taxon>
        <taxon>Euteleostomi</taxon>
        <taxon>Mammalia</taxon>
        <taxon>Eutheria</taxon>
        <taxon>Euarchontoglires</taxon>
        <taxon>Primates</taxon>
        <taxon>Haplorrhini</taxon>
        <taxon>Catarrhini</taxon>
        <taxon>Hominidae</taxon>
        <taxon>Homo</taxon>
    </lineage>
</organism>
<accession>Q96S94</accession>
<accession>A0A024R072</accession>
<accession>A0A024R077</accession>
<accession>A0A0C4DGC4</accession>
<accession>A8K8A3</accession>
<accession>B1B152</accession>
<accession>F2Z3J5</accession>
<accession>Q5T2N5</accession>
<accession>Q5T2N6</accession>
<accession>Q6IQ12</accession>
<accession>Q7Z4Z8</accession>
<accession>Q8N3C9</accession>
<accession>Q8N3D5</accession>
<accession>Q8NHE3</accession>
<accession>Q8TEL0</accession>
<accession>Q96B00</accession>
<protein>
    <recommendedName>
        <fullName>Cyclin-L2</fullName>
    </recommendedName>
    <alternativeName>
        <fullName>Paneth cell-enhanced expression protein</fullName>
    </alternativeName>
</protein>
<reference key="1">
    <citation type="journal article" date="2004" name="J. Biol. Chem.">
        <title>Cyclin L2, a novel RNA polymerase II-associated cyclin, is involved in pre-mRNA splicing and induces apoptosis of human hepatocellular carcinoma cells.</title>
        <authorList>
            <person name="Yang L."/>
            <person name="Li N."/>
            <person name="Wang C."/>
            <person name="Yu Y."/>
            <person name="Yuan L."/>
            <person name="Zhang M."/>
            <person name="Cao X."/>
        </authorList>
    </citation>
    <scope>NUCLEOTIDE SEQUENCE [MRNA] (ISOFORMS 1 AND 2)</scope>
    <scope>TISSUE SPECIFICITY</scope>
    <scope>SUBCELLULAR LOCATION</scope>
    <scope>FUNCTION</scope>
    <scope>INTERACTION WITH POLR2A; CDC2L; SFRS2 AND SFRS7</scope>
    <source>
        <tissue>Bone marrow</tissue>
    </source>
</reference>
<reference key="2">
    <citation type="submission" date="2002-01" db="EMBL/GenBank/DDBJ databases">
        <title>The nucleotide sequence of a long cDNA clone isolated from human spleen.</title>
        <authorList>
            <person name="Jikuya H."/>
            <person name="Takano J."/>
            <person name="Nomura N."/>
            <person name="Kikuno R."/>
            <person name="Nagase T."/>
            <person name="Ohara O."/>
        </authorList>
    </citation>
    <scope>NUCLEOTIDE SEQUENCE [LARGE SCALE MRNA] (ISOFORM 5)</scope>
    <source>
        <tissue>Spleen</tissue>
    </source>
</reference>
<reference key="3">
    <citation type="journal article" date="2004" name="Nat. Genet.">
        <title>Complete sequencing and characterization of 21,243 full-length human cDNAs.</title>
        <authorList>
            <person name="Ota T."/>
            <person name="Suzuki Y."/>
            <person name="Nishikawa T."/>
            <person name="Otsuki T."/>
            <person name="Sugiyama T."/>
            <person name="Irie R."/>
            <person name="Wakamatsu A."/>
            <person name="Hayashi K."/>
            <person name="Sato H."/>
            <person name="Nagai K."/>
            <person name="Kimura K."/>
            <person name="Makita H."/>
            <person name="Sekine M."/>
            <person name="Obayashi M."/>
            <person name="Nishi T."/>
            <person name="Shibahara T."/>
            <person name="Tanaka T."/>
            <person name="Ishii S."/>
            <person name="Yamamoto J."/>
            <person name="Saito K."/>
            <person name="Kawai Y."/>
            <person name="Isono Y."/>
            <person name="Nakamura Y."/>
            <person name="Nagahari K."/>
            <person name="Murakami K."/>
            <person name="Yasuda T."/>
            <person name="Iwayanagi T."/>
            <person name="Wagatsuma M."/>
            <person name="Shiratori A."/>
            <person name="Sudo H."/>
            <person name="Hosoiri T."/>
            <person name="Kaku Y."/>
            <person name="Kodaira H."/>
            <person name="Kondo H."/>
            <person name="Sugawara M."/>
            <person name="Takahashi M."/>
            <person name="Kanda K."/>
            <person name="Yokoi T."/>
            <person name="Furuya T."/>
            <person name="Kikkawa E."/>
            <person name="Omura Y."/>
            <person name="Abe K."/>
            <person name="Kamihara K."/>
            <person name="Katsuta N."/>
            <person name="Sato K."/>
            <person name="Tanikawa M."/>
            <person name="Yamazaki M."/>
            <person name="Ninomiya K."/>
            <person name="Ishibashi T."/>
            <person name="Yamashita H."/>
            <person name="Murakawa K."/>
            <person name="Fujimori K."/>
            <person name="Tanai H."/>
            <person name="Kimata M."/>
            <person name="Watanabe M."/>
            <person name="Hiraoka S."/>
            <person name="Chiba Y."/>
            <person name="Ishida S."/>
            <person name="Ono Y."/>
            <person name="Takiguchi S."/>
            <person name="Watanabe S."/>
            <person name="Yosida M."/>
            <person name="Hotuta T."/>
            <person name="Kusano J."/>
            <person name="Kanehori K."/>
            <person name="Takahashi-Fujii A."/>
            <person name="Hara H."/>
            <person name="Tanase T.-O."/>
            <person name="Nomura Y."/>
            <person name="Togiya S."/>
            <person name="Komai F."/>
            <person name="Hara R."/>
            <person name="Takeuchi K."/>
            <person name="Arita M."/>
            <person name="Imose N."/>
            <person name="Musashino K."/>
            <person name="Yuuki H."/>
            <person name="Oshima A."/>
            <person name="Sasaki N."/>
            <person name="Aotsuka S."/>
            <person name="Yoshikawa Y."/>
            <person name="Matsunawa H."/>
            <person name="Ichihara T."/>
            <person name="Shiohata N."/>
            <person name="Sano S."/>
            <person name="Moriya S."/>
            <person name="Momiyama H."/>
            <person name="Satoh N."/>
            <person name="Takami S."/>
            <person name="Terashima Y."/>
            <person name="Suzuki O."/>
            <person name="Nakagawa S."/>
            <person name="Senoh A."/>
            <person name="Mizoguchi H."/>
            <person name="Goto Y."/>
            <person name="Shimizu F."/>
            <person name="Wakebe H."/>
            <person name="Hishigaki H."/>
            <person name="Watanabe T."/>
            <person name="Sugiyama A."/>
            <person name="Takemoto M."/>
            <person name="Kawakami B."/>
            <person name="Yamazaki M."/>
            <person name="Watanabe K."/>
            <person name="Kumagai A."/>
            <person name="Itakura S."/>
            <person name="Fukuzumi Y."/>
            <person name="Fujimori Y."/>
            <person name="Komiyama M."/>
            <person name="Tashiro H."/>
            <person name="Tanigami A."/>
            <person name="Fujiwara T."/>
            <person name="Ono T."/>
            <person name="Yamada K."/>
            <person name="Fujii Y."/>
            <person name="Ozaki K."/>
            <person name="Hirao M."/>
            <person name="Ohmori Y."/>
            <person name="Kawabata A."/>
            <person name="Hikiji T."/>
            <person name="Kobatake N."/>
            <person name="Inagaki H."/>
            <person name="Ikema Y."/>
            <person name="Okamoto S."/>
            <person name="Okitani R."/>
            <person name="Kawakami T."/>
            <person name="Noguchi S."/>
            <person name="Itoh T."/>
            <person name="Shigeta K."/>
            <person name="Senba T."/>
            <person name="Matsumura K."/>
            <person name="Nakajima Y."/>
            <person name="Mizuno T."/>
            <person name="Morinaga M."/>
            <person name="Sasaki M."/>
            <person name="Togashi T."/>
            <person name="Oyama M."/>
            <person name="Hata H."/>
            <person name="Watanabe M."/>
            <person name="Komatsu T."/>
            <person name="Mizushima-Sugano J."/>
            <person name="Satoh T."/>
            <person name="Shirai Y."/>
            <person name="Takahashi Y."/>
            <person name="Nakagawa K."/>
            <person name="Okumura K."/>
            <person name="Nagase T."/>
            <person name="Nomura N."/>
            <person name="Kikuchi H."/>
            <person name="Masuho Y."/>
            <person name="Yamashita R."/>
            <person name="Nakai K."/>
            <person name="Yada T."/>
            <person name="Nakamura Y."/>
            <person name="Ohara O."/>
            <person name="Isogai T."/>
            <person name="Sugano S."/>
        </authorList>
    </citation>
    <scope>NUCLEOTIDE SEQUENCE [LARGE SCALE MRNA] (ISOFORMS 3 AND 4)</scope>
    <source>
        <tissue>Placenta</tissue>
        <tissue>Testis</tissue>
    </source>
</reference>
<reference key="4">
    <citation type="journal article" date="2006" name="Nature">
        <title>The DNA sequence and biological annotation of human chromosome 1.</title>
        <authorList>
            <person name="Gregory S.G."/>
            <person name="Barlow K.F."/>
            <person name="McLay K.E."/>
            <person name="Kaul R."/>
            <person name="Swarbreck D."/>
            <person name="Dunham A."/>
            <person name="Scott C.E."/>
            <person name="Howe K.L."/>
            <person name="Woodfine K."/>
            <person name="Spencer C.C.A."/>
            <person name="Jones M.C."/>
            <person name="Gillson C."/>
            <person name="Searle S."/>
            <person name="Zhou Y."/>
            <person name="Kokocinski F."/>
            <person name="McDonald L."/>
            <person name="Evans R."/>
            <person name="Phillips K."/>
            <person name="Atkinson A."/>
            <person name="Cooper R."/>
            <person name="Jones C."/>
            <person name="Hall R.E."/>
            <person name="Andrews T.D."/>
            <person name="Lloyd C."/>
            <person name="Ainscough R."/>
            <person name="Almeida J.P."/>
            <person name="Ambrose K.D."/>
            <person name="Anderson F."/>
            <person name="Andrew R.W."/>
            <person name="Ashwell R.I.S."/>
            <person name="Aubin K."/>
            <person name="Babbage A.K."/>
            <person name="Bagguley C.L."/>
            <person name="Bailey J."/>
            <person name="Beasley H."/>
            <person name="Bethel G."/>
            <person name="Bird C.P."/>
            <person name="Bray-Allen S."/>
            <person name="Brown J.Y."/>
            <person name="Brown A.J."/>
            <person name="Buckley D."/>
            <person name="Burton J."/>
            <person name="Bye J."/>
            <person name="Carder C."/>
            <person name="Chapman J.C."/>
            <person name="Clark S.Y."/>
            <person name="Clarke G."/>
            <person name="Clee C."/>
            <person name="Cobley V."/>
            <person name="Collier R.E."/>
            <person name="Corby N."/>
            <person name="Coville G.J."/>
            <person name="Davies J."/>
            <person name="Deadman R."/>
            <person name="Dunn M."/>
            <person name="Earthrowl M."/>
            <person name="Ellington A.G."/>
            <person name="Errington H."/>
            <person name="Frankish A."/>
            <person name="Frankland J."/>
            <person name="French L."/>
            <person name="Garner P."/>
            <person name="Garnett J."/>
            <person name="Gay L."/>
            <person name="Ghori M.R.J."/>
            <person name="Gibson R."/>
            <person name="Gilby L.M."/>
            <person name="Gillett W."/>
            <person name="Glithero R.J."/>
            <person name="Grafham D.V."/>
            <person name="Griffiths C."/>
            <person name="Griffiths-Jones S."/>
            <person name="Grocock R."/>
            <person name="Hammond S."/>
            <person name="Harrison E.S.I."/>
            <person name="Hart E."/>
            <person name="Haugen E."/>
            <person name="Heath P.D."/>
            <person name="Holmes S."/>
            <person name="Holt K."/>
            <person name="Howden P.J."/>
            <person name="Hunt A.R."/>
            <person name="Hunt S.E."/>
            <person name="Hunter G."/>
            <person name="Isherwood J."/>
            <person name="James R."/>
            <person name="Johnson C."/>
            <person name="Johnson D."/>
            <person name="Joy A."/>
            <person name="Kay M."/>
            <person name="Kershaw J.K."/>
            <person name="Kibukawa M."/>
            <person name="Kimberley A.M."/>
            <person name="King A."/>
            <person name="Knights A.J."/>
            <person name="Lad H."/>
            <person name="Laird G."/>
            <person name="Lawlor S."/>
            <person name="Leongamornlert D.A."/>
            <person name="Lloyd D.M."/>
            <person name="Loveland J."/>
            <person name="Lovell J."/>
            <person name="Lush M.J."/>
            <person name="Lyne R."/>
            <person name="Martin S."/>
            <person name="Mashreghi-Mohammadi M."/>
            <person name="Matthews L."/>
            <person name="Matthews N.S.W."/>
            <person name="McLaren S."/>
            <person name="Milne S."/>
            <person name="Mistry S."/>
            <person name="Moore M.J.F."/>
            <person name="Nickerson T."/>
            <person name="O'Dell C.N."/>
            <person name="Oliver K."/>
            <person name="Palmeiri A."/>
            <person name="Palmer S.A."/>
            <person name="Parker A."/>
            <person name="Patel D."/>
            <person name="Pearce A.V."/>
            <person name="Peck A.I."/>
            <person name="Pelan S."/>
            <person name="Phelps K."/>
            <person name="Phillimore B.J."/>
            <person name="Plumb R."/>
            <person name="Rajan J."/>
            <person name="Raymond C."/>
            <person name="Rouse G."/>
            <person name="Saenphimmachak C."/>
            <person name="Sehra H.K."/>
            <person name="Sheridan E."/>
            <person name="Shownkeen R."/>
            <person name="Sims S."/>
            <person name="Skuce C.D."/>
            <person name="Smith M."/>
            <person name="Steward C."/>
            <person name="Subramanian S."/>
            <person name="Sycamore N."/>
            <person name="Tracey A."/>
            <person name="Tromans A."/>
            <person name="Van Helmond Z."/>
            <person name="Wall M."/>
            <person name="Wallis J.M."/>
            <person name="White S."/>
            <person name="Whitehead S.L."/>
            <person name="Wilkinson J.E."/>
            <person name="Willey D.L."/>
            <person name="Williams H."/>
            <person name="Wilming L."/>
            <person name="Wray P.W."/>
            <person name="Wu Z."/>
            <person name="Coulson A."/>
            <person name="Vaudin M."/>
            <person name="Sulston J.E."/>
            <person name="Durbin R.M."/>
            <person name="Hubbard T."/>
            <person name="Wooster R."/>
            <person name="Dunham I."/>
            <person name="Carter N.P."/>
            <person name="McVean G."/>
            <person name="Ross M.T."/>
            <person name="Harrow J."/>
            <person name="Olson M.V."/>
            <person name="Beck S."/>
            <person name="Rogers J."/>
            <person name="Bentley D.R."/>
        </authorList>
    </citation>
    <scope>NUCLEOTIDE SEQUENCE [LARGE SCALE GENOMIC DNA]</scope>
</reference>
<reference key="5">
    <citation type="submission" date="2005-07" db="EMBL/GenBank/DDBJ databases">
        <authorList>
            <person name="Mural R.J."/>
            <person name="Istrail S."/>
            <person name="Sutton G.G."/>
            <person name="Florea L."/>
            <person name="Halpern A.L."/>
            <person name="Mobarry C.M."/>
            <person name="Lippert R."/>
            <person name="Walenz B."/>
            <person name="Shatkay H."/>
            <person name="Dew I."/>
            <person name="Miller J.R."/>
            <person name="Flanigan M.J."/>
            <person name="Edwards N.J."/>
            <person name="Bolanos R."/>
            <person name="Fasulo D."/>
            <person name="Halldorsson B.V."/>
            <person name="Hannenhalli S."/>
            <person name="Turner R."/>
            <person name="Yooseph S."/>
            <person name="Lu F."/>
            <person name="Nusskern D.R."/>
            <person name="Shue B.C."/>
            <person name="Zheng X.H."/>
            <person name="Zhong F."/>
            <person name="Delcher A.L."/>
            <person name="Huson D.H."/>
            <person name="Kravitz S.A."/>
            <person name="Mouchard L."/>
            <person name="Reinert K."/>
            <person name="Remington K.A."/>
            <person name="Clark A.G."/>
            <person name="Waterman M.S."/>
            <person name="Eichler E.E."/>
            <person name="Adams M.D."/>
            <person name="Hunkapiller M.W."/>
            <person name="Myers E.W."/>
            <person name="Venter J.C."/>
        </authorList>
    </citation>
    <scope>NUCLEOTIDE SEQUENCE [LARGE SCALE GENOMIC DNA]</scope>
</reference>
<reference key="6">
    <citation type="journal article" date="2004" name="Genome Res.">
        <title>The status, quality, and expansion of the NIH full-length cDNA project: the Mammalian Gene Collection (MGC).</title>
        <authorList>
            <consortium name="The MGC Project Team"/>
        </authorList>
    </citation>
    <scope>NUCLEOTIDE SEQUENCE [LARGE SCALE MRNA] (ISOFORMS 5 AND 3)</scope>
    <source>
        <tissue>Bone</tissue>
        <tissue>Brain</tissue>
    </source>
</reference>
<reference key="7">
    <citation type="journal article" date="2007" name="BMC Genomics">
        <title>The full-ORF clone resource of the German cDNA consortium.</title>
        <authorList>
            <person name="Bechtel S."/>
            <person name="Rosenfelder H."/>
            <person name="Duda A."/>
            <person name="Schmidt C.P."/>
            <person name="Ernst U."/>
            <person name="Wellenreuther R."/>
            <person name="Mehrle A."/>
            <person name="Schuster C."/>
            <person name="Bahr A."/>
            <person name="Bloecker H."/>
            <person name="Heubner D."/>
            <person name="Hoerlein A."/>
            <person name="Michel G."/>
            <person name="Wedler H."/>
            <person name="Koehrer K."/>
            <person name="Ottenwaelder B."/>
            <person name="Poustka A."/>
            <person name="Wiemann S."/>
            <person name="Schupp I."/>
        </authorList>
    </citation>
    <scope>NUCLEOTIDE SEQUENCE [MRNA] OF 14-226 (ISOFORM 5)</scope>
    <scope>NUCLEOTIDE SEQUENCE [LARGE SCALE MRNA] OF 367-520 (ISOFORM 1/3)</scope>
    <source>
        <tissue>Amygdala</tissue>
        <tissue>Melanoma</tissue>
    </source>
</reference>
<reference key="8">
    <citation type="submission" date="2003-07" db="EMBL/GenBank/DDBJ databases">
        <title>Cloning of a novel human cDNA homology to murine Paneth cell enhanced expression mRNA.</title>
        <authorList>
            <person name="Zhao E.P."/>
            <person name="Yu L."/>
            <person name="Wan Y.Z."/>
            <person name="Tu Q."/>
            <person name="Zheng L.H."/>
            <person name="Zhao S.Y."/>
        </authorList>
    </citation>
    <scope>NUCLEOTIDE SEQUENCE [MRNA] OF 324-520</scope>
</reference>
<reference key="9">
    <citation type="journal article" date="2008" name="J. Biol. Chem.">
        <title>Characterization of cyclin L1 and L2 interactions with CDK11 and splicing factors: influence of cyclin L isoforms on splice site selection.</title>
        <authorList>
            <person name="Loyer P."/>
            <person name="Trembley J.H."/>
            <person name="Grenet J.A."/>
            <person name="Busson A."/>
            <person name="Corlu A."/>
            <person name="Zhao W."/>
            <person name="Kocak M."/>
            <person name="Kidd V.J."/>
            <person name="Lahti J.M."/>
        </authorList>
    </citation>
    <scope>FUNCTION</scope>
    <scope>IDENTIFICATION OF ISOFORMS 1; 4 AND 5</scope>
    <scope>INTERACTION WITH CDK11B AND CKII</scope>
    <scope>SUBCELLULAR LOCATION</scope>
    <scope>TISSUE SPECIFICITY</scope>
</reference>
<reference key="10">
    <citation type="journal article" date="2008" name="Proc. Natl. Acad. Sci. U.S.A.">
        <title>A quantitative atlas of mitotic phosphorylation.</title>
        <authorList>
            <person name="Dephoure N."/>
            <person name="Zhou C."/>
            <person name="Villen J."/>
            <person name="Beausoleil S.A."/>
            <person name="Bakalarski C.E."/>
            <person name="Elledge S.J."/>
            <person name="Gygi S.P."/>
        </authorList>
    </citation>
    <scope>IDENTIFICATION BY MASS SPECTROMETRY [LARGE SCALE ANALYSIS]</scope>
    <source>
        <tissue>Cervix carcinoma</tissue>
    </source>
</reference>
<reference key="11">
    <citation type="journal article" date="2009" name="Sci. Signal.">
        <title>Quantitative phosphoproteomic analysis of T cell receptor signaling reveals system-wide modulation of protein-protein interactions.</title>
        <authorList>
            <person name="Mayya V."/>
            <person name="Lundgren D.H."/>
            <person name="Hwang S.-I."/>
            <person name="Rezaul K."/>
            <person name="Wu L."/>
            <person name="Eng J.K."/>
            <person name="Rodionov V."/>
            <person name="Han D.K."/>
        </authorList>
    </citation>
    <scope>PHOSPHORYLATION [LARGE SCALE ANALYSIS] AT SER-330</scope>
    <scope>IDENTIFICATION BY MASS SPECTROMETRY [LARGE SCALE ANALYSIS]</scope>
    <source>
        <tissue>Leukemic T-cell</tissue>
    </source>
</reference>
<reference key="12">
    <citation type="journal article" date="2010" name="Sci. Signal.">
        <title>Quantitative phosphoproteomics reveals widespread full phosphorylation site occupancy during mitosis.</title>
        <authorList>
            <person name="Olsen J.V."/>
            <person name="Vermeulen M."/>
            <person name="Santamaria A."/>
            <person name="Kumar C."/>
            <person name="Miller M.L."/>
            <person name="Jensen L.J."/>
            <person name="Gnad F."/>
            <person name="Cox J."/>
            <person name="Jensen T.S."/>
            <person name="Nigg E.A."/>
            <person name="Brunak S."/>
            <person name="Mann M."/>
        </authorList>
    </citation>
    <scope>PHOSPHORYLATION [LARGE SCALE ANALYSIS] AT SER-330 AND SER-338</scope>
    <scope>IDENTIFICATION BY MASS SPECTROMETRY [LARGE SCALE ANALYSIS]</scope>
    <source>
        <tissue>Cervix carcinoma</tissue>
    </source>
</reference>
<reference key="13">
    <citation type="journal article" date="2011" name="Sci. Signal.">
        <title>System-wide temporal characterization of the proteome and phosphoproteome of human embryonic stem cell differentiation.</title>
        <authorList>
            <person name="Rigbolt K.T."/>
            <person name="Prokhorova T.A."/>
            <person name="Akimov V."/>
            <person name="Henningsen J."/>
            <person name="Johansen P.T."/>
            <person name="Kratchmarova I."/>
            <person name="Kassem M."/>
            <person name="Mann M."/>
            <person name="Olsen J.V."/>
            <person name="Blagoev B."/>
        </authorList>
    </citation>
    <scope>PHOSPHORYLATION [LARGE SCALE ANALYSIS] AT SER-330; SER-348; SER-351 AND SER-369</scope>
    <scope>IDENTIFICATION BY MASS SPECTROMETRY [LARGE SCALE ANALYSIS]</scope>
</reference>
<reference key="14">
    <citation type="journal article" date="2012" name="Mol. Cell. Proteomics">
        <title>Comparative large-scale characterisation of plant vs. mammal proteins reveals similar and idiosyncratic N-alpha acetylation features.</title>
        <authorList>
            <person name="Bienvenut W.V."/>
            <person name="Sumpton D."/>
            <person name="Martinez A."/>
            <person name="Lilla S."/>
            <person name="Espagne C."/>
            <person name="Meinnel T."/>
            <person name="Giglione C."/>
        </authorList>
    </citation>
    <scope>ACETYLATION [LARGE SCALE ANALYSIS] AT ALA-2</scope>
    <scope>CLEAVAGE OF INITIATOR METHIONINE [LARGE SCALE ANALYSIS]</scope>
    <scope>IDENTIFICATION BY MASS SPECTROMETRY [LARGE SCALE ANALYSIS]</scope>
</reference>
<reference key="15">
    <citation type="journal article" date="2012" name="Proc. Natl. Acad. Sci. U.S.A.">
        <title>N-terminal acetylome analyses and functional insights of the N-terminal acetyltransferase NatB.</title>
        <authorList>
            <person name="Van Damme P."/>
            <person name="Lasa M."/>
            <person name="Polevoda B."/>
            <person name="Gazquez C."/>
            <person name="Elosegui-Artola A."/>
            <person name="Kim D.S."/>
            <person name="De Juan-Pardo E."/>
            <person name="Demeyer K."/>
            <person name="Hole K."/>
            <person name="Larrea E."/>
            <person name="Timmerman E."/>
            <person name="Prieto J."/>
            <person name="Arnesen T."/>
            <person name="Sherman F."/>
            <person name="Gevaert K."/>
            <person name="Aldabe R."/>
        </authorList>
    </citation>
    <scope>ACETYLATION [LARGE SCALE ANALYSIS] AT ALA-2</scope>
    <scope>CLEAVAGE OF INITIATOR METHIONINE [LARGE SCALE ANALYSIS]</scope>
    <scope>IDENTIFICATION BY MASS SPECTROMETRY [LARGE SCALE ANALYSIS]</scope>
</reference>
<reference key="16">
    <citation type="journal article" date="2013" name="J. Proteome Res.">
        <title>Toward a comprehensive characterization of a human cancer cell phosphoproteome.</title>
        <authorList>
            <person name="Zhou H."/>
            <person name="Di Palma S."/>
            <person name="Preisinger C."/>
            <person name="Peng M."/>
            <person name="Polat A.N."/>
            <person name="Heck A.J."/>
            <person name="Mohammed S."/>
        </authorList>
    </citation>
    <scope>PHOSPHORYLATION [LARGE SCALE ANALYSIS] AT SER-330; SER-338 AND SER-369</scope>
    <scope>IDENTIFICATION BY MASS SPECTROMETRY [LARGE SCALE ANALYSIS]</scope>
    <source>
        <tissue>Cervix carcinoma</tissue>
        <tissue>Erythroleukemia</tissue>
    </source>
</reference>
<reference key="17">
    <citation type="journal article" date="2014" name="J. Proteomics">
        <title>An enzyme assisted RP-RPLC approach for in-depth analysis of human liver phosphoproteome.</title>
        <authorList>
            <person name="Bian Y."/>
            <person name="Song C."/>
            <person name="Cheng K."/>
            <person name="Dong M."/>
            <person name="Wang F."/>
            <person name="Huang J."/>
            <person name="Sun D."/>
            <person name="Wang L."/>
            <person name="Ye M."/>
            <person name="Zou H."/>
        </authorList>
    </citation>
    <scope>PHOSPHORYLATION [LARGE SCALE ANALYSIS] AT SER-330 AND SER-338</scope>
    <scope>IDENTIFICATION BY MASS SPECTROMETRY [LARGE SCALE ANALYSIS]</scope>
    <source>
        <tissue>Liver</tissue>
    </source>
</reference>
<sequence length="520" mass="58147">MAAAAAAAGAAGSAAPAAAAGAPGSGGAPSGSQGVLIGDRLYSGVLITLENCLLPDDKLRFTPSMSSGLDTDTETDLRVVGCELIQAAGILLRLPQVAMATGQVLFQRFFYTKSFVKHSMEHVSMACVHLASKIEEAPRRIRDVINVFHRLRQLRDKKKPVPLLLDQDYVNLKNQIIKAERRVLKELGFCVHVKHPHKIIVMYLQVLECERNQHLVQTSWNYMNDSLRTDVFVRFQPESIACACIYLAARTLEIPLPNRPHWFLLFGATEEEIQEICLKILQLYARKKVDLTHLEGEVEKRKHAIEEAKAQARGLLPGGTQVLDGTSGFSPAPKLVESPKEGKGSKPSPLSVKNTKRRLEGAKKAKADSPVNGLPKGRESRSRSRSREQSYSRSPSRSASPKRRKSDSGSTSGGSKSQSRSRSRSDSPPRQAPRSAPYKGSEIRGSRKSKDCKYPQKPHKSRSRSSSRSRSRSRERADNPGKYKKKSHYYRDQRRERSRSYERTGRRYERDHPGHSRHRR</sequence>
<gene>
    <name type="primary">CCNL2</name>
    <name type="ORF">SB138</name>
</gene>
<feature type="initiator methionine" description="Removed" evidence="14 15">
    <location>
        <position position="1"/>
    </location>
</feature>
<feature type="chain" id="PRO_0000080487" description="Cyclin-L2">
    <location>
        <begin position="2"/>
        <end position="520"/>
    </location>
</feature>
<feature type="region of interest" description="Cyclin-like 1">
    <location>
        <begin position="83"/>
        <end position="185"/>
    </location>
</feature>
<feature type="region of interest" description="Cyclin-like 2">
    <location>
        <begin position="198"/>
        <end position="282"/>
    </location>
</feature>
<feature type="region of interest" description="Disordered" evidence="2">
    <location>
        <begin position="316"/>
        <end position="520"/>
    </location>
</feature>
<feature type="region of interest" description="RS">
    <location>
        <begin position="385"/>
        <end position="423"/>
    </location>
</feature>
<feature type="compositionally biased region" description="Basic and acidic residues" evidence="2">
    <location>
        <begin position="357"/>
        <end position="367"/>
    </location>
</feature>
<feature type="compositionally biased region" description="Basic and acidic residues" evidence="2">
    <location>
        <begin position="376"/>
        <end position="390"/>
    </location>
</feature>
<feature type="compositionally biased region" description="Low complexity" evidence="2">
    <location>
        <begin position="408"/>
        <end position="436"/>
    </location>
</feature>
<feature type="compositionally biased region" description="Basic and acidic residues" evidence="2">
    <location>
        <begin position="441"/>
        <end position="454"/>
    </location>
</feature>
<feature type="compositionally biased region" description="Basic residues" evidence="2">
    <location>
        <begin position="456"/>
        <end position="471"/>
    </location>
</feature>
<feature type="compositionally biased region" description="Basic and acidic residues" evidence="2">
    <location>
        <begin position="472"/>
        <end position="481"/>
    </location>
</feature>
<feature type="compositionally biased region" description="Basic and acidic residues" evidence="2">
    <location>
        <begin position="489"/>
        <end position="514"/>
    </location>
</feature>
<feature type="modified residue" description="N-acetylalanine" evidence="14 15">
    <location>
        <position position="2"/>
    </location>
</feature>
<feature type="modified residue" description="Phosphoserine" evidence="11 12 13 16 17">
    <location>
        <position position="330"/>
    </location>
</feature>
<feature type="modified residue" description="Phosphoserine" evidence="12 16 17">
    <location>
        <position position="338"/>
    </location>
</feature>
<feature type="modified residue" description="Phosphoserine" evidence="13">
    <location>
        <position position="348"/>
    </location>
</feature>
<feature type="modified residue" description="Phosphoserine" evidence="13">
    <location>
        <position position="351"/>
    </location>
</feature>
<feature type="modified residue" description="Phosphoserine" evidence="13 16">
    <location>
        <position position="369"/>
    </location>
</feature>
<feature type="splice variant" id="VSP_016132" description="In isoform 3." evidence="6 7">
    <location>
        <begin position="1"/>
        <end position="222"/>
    </location>
</feature>
<feature type="splice variant" id="VSP_058301" description="In isoform 4." evidence="6">
    <original>NYMNDSLRTDVFVRFQ</original>
    <variation>VASEDPLLKWDSWQRL</variation>
    <location>
        <begin position="221"/>
        <end position="236"/>
    </location>
</feature>
<feature type="splice variant" id="VSP_058302" description="In isoform 2.">
    <original>NYMNDSL</original>
    <variation>VASEGIT</variation>
    <location>
        <begin position="221"/>
        <end position="227"/>
    </location>
</feature>
<feature type="splice variant" id="VSP_016130" description="In isoform 5." evidence="5 7 8 9">
    <original>NYMNDS</original>
    <variation>VASEGK</variation>
    <location>
        <begin position="221"/>
        <end position="226"/>
    </location>
</feature>
<feature type="splice variant" id="VSP_016131" description="In isoform 5." evidence="5 7 8 9">
    <location>
        <begin position="227"/>
        <end position="520"/>
    </location>
</feature>
<feature type="splice variant" id="VSP_058303" description="In isoform 2.">
    <location>
        <begin position="228"/>
        <end position="520"/>
    </location>
</feature>
<feature type="splice variant" id="VSP_058304" description="In isoform 4.">
    <location>
        <begin position="237"/>
        <end position="520"/>
    </location>
</feature>
<feature type="sequence conflict" description="In Ref. 6; AAH16333." evidence="10" ref="6">
    <original>T</original>
    <variation>S</variation>
    <location>
        <position position="71"/>
    </location>
</feature>
<feature type="sequence conflict" description="In Ref. 8; AAP97201." evidence="10" ref="8">
    <original>DG</original>
    <variation>MS</variation>
    <location>
        <begin position="324"/>
        <end position="325"/>
    </location>
</feature>
<proteinExistence type="evidence at protein level"/>
<name>CCNL2_HUMAN</name>
<comment type="function">
    <text evidence="3 4">Involved in pre-mRNA splicing. May induce cell death, possibly by acting on the transcription and RNA processing of apoptosis-related factors.</text>
</comment>
<comment type="subunit">
    <text evidence="3 4">Interacts with CDK11A, CDK11B, CDK12, CDK13 and POLR2A, the hyperphosphorylated C-terminal domain (CTD) of RNA polymerase II (PubMed:14684736, PubMed:18216018). May form a ternary complex with CDK11B and casein kinase II (CKII) (PubMed:18216018). Interacts with pre-mRNA-splicing factors, including at least SRSF1, SRSF2 AND SRSF7/SLU7 (PubMed:14684736, PubMed:18216018).</text>
</comment>
<comment type="interaction">
    <interactant intactId="EBI-1045974">
        <id>Q96S94</id>
    </interactant>
    <interactant intactId="EBI-747225">
        <id>Q59EK9</id>
        <label>RUNDC3A</label>
    </interactant>
    <organismsDiffer>false</organismsDiffer>
    <experiments>3</experiments>
</comment>
<comment type="interaction">
    <interactant intactId="EBI-12024864">
        <id>Q96S94-5</id>
    </interactant>
    <interactant intactId="EBI-489887">
        <id>P50402</id>
        <label>EMD</label>
    </interactant>
    <organismsDiffer>false</organismsDiffer>
    <experiments>3</experiments>
</comment>
<comment type="interaction">
    <interactant intactId="EBI-12024864">
        <id>Q96S94-5</id>
    </interactant>
    <interactant intactId="EBI-6658203">
        <id>Q86YD7</id>
        <label>FAM90A1</label>
    </interactant>
    <organismsDiffer>false</organismsDiffer>
    <experiments>3</experiments>
</comment>
<comment type="interaction">
    <interactant intactId="EBI-12024864">
        <id>Q96S94-5</id>
    </interactant>
    <interactant intactId="EBI-10176379">
        <id>P59991</id>
        <label>KRTAP12-2</label>
    </interactant>
    <organismsDiffer>false</organismsDiffer>
    <experiments>3</experiments>
</comment>
<comment type="interaction">
    <interactant intactId="EBI-12024864">
        <id>Q96S94-5</id>
    </interactant>
    <interactant intactId="EBI-1057615">
        <id>O15479</id>
        <label>MAGEB2</label>
    </interactant>
    <organismsDiffer>false</organismsDiffer>
    <experiments>3</experiments>
</comment>
<comment type="interaction">
    <interactant intactId="EBI-12024864">
        <id>Q96S94-5</id>
    </interactant>
    <interactant intactId="EBI-724076">
        <id>Q99750</id>
        <label>MDFI</label>
    </interactant>
    <organismsDiffer>false</organismsDiffer>
    <experiments>3</experiments>
</comment>
<comment type="interaction">
    <interactant intactId="EBI-12024864">
        <id>Q96S94-5</id>
    </interactant>
    <interactant intactId="EBI-10232538">
        <id>Q8WWB5</id>
        <label>PIH1D2</label>
    </interactant>
    <organismsDiffer>false</organismsDiffer>
    <experiments>3</experiments>
</comment>
<comment type="interaction">
    <interactant intactId="EBI-12024864">
        <id>Q96S94-5</id>
    </interactant>
    <interactant intactId="EBI-11957366">
        <id>Q59EK9-3</id>
        <label>RUNDC3A</label>
    </interactant>
    <organismsDiffer>false</organismsDiffer>
    <experiments>3</experiments>
</comment>
<comment type="interaction">
    <interactant intactId="EBI-12024864">
        <id>Q96S94-5</id>
    </interactant>
    <interactant intactId="EBI-725997">
        <id>Q8WV44</id>
        <label>TRIM41</label>
    </interactant>
    <organismsDiffer>false</organismsDiffer>
    <experiments>3</experiments>
</comment>
<comment type="interaction">
    <interactant intactId="EBI-12024864">
        <id>Q96S94-5</id>
    </interactant>
    <interactant intactId="EBI-2511991">
        <id>Q9Y2K6</id>
        <label>USP20</label>
    </interactant>
    <organismsDiffer>false</organismsDiffer>
    <experiments>3</experiments>
</comment>
<comment type="interaction">
    <interactant intactId="EBI-12024864">
        <id>Q96S94-5</id>
    </interactant>
    <interactant intactId="EBI-11522250">
        <id>O15156-2</id>
        <label>ZBTB7B</label>
    </interactant>
    <organismsDiffer>false</organismsDiffer>
    <experiments>3</experiments>
</comment>
<comment type="subcellular location">
    <subcellularLocation>
        <location evidence="3 4">Nucleus speckle</location>
    </subcellularLocation>
    <subcellularLocation>
        <location evidence="4">Nucleus</location>
        <location evidence="4">Nucleoplasm</location>
    </subcellularLocation>
</comment>
<comment type="alternative products">
    <event type="alternative splicing"/>
    <isoform>
        <id>Q96S94-1</id>
        <name>1</name>
        <name>cyclin L2alpha</name>
        <sequence type="displayed"/>
    </isoform>
    <isoform>
        <id>Q96S94-2</id>
        <name>2</name>
        <name>CCNL2s</name>
        <sequence type="described" ref="VSP_058302 VSP_058303"/>
    </isoform>
    <isoform>
        <id>Q96S94-3</id>
        <name>3</name>
        <sequence type="described" ref="VSP_016132"/>
    </isoform>
    <isoform>
        <id>Q96S94-4</id>
        <name>4</name>
        <name>cyclin L2betaB</name>
        <sequence type="described" ref="VSP_058301 VSP_058304"/>
    </isoform>
    <isoform>
        <id>Q96S94-5</id>
        <name>5</name>
        <name>cyclin L2betaA</name>
        <sequence type="described" ref="VSP_016130 VSP_016131"/>
    </isoform>
</comment>
<comment type="tissue specificity">
    <text evidence="3 4">Widely expressed.</text>
</comment>
<comment type="domain">
    <text evidence="1">Contains a RS region (arginine-serine dipeptide repeat) within the C-terminal domain which is the hallmark of the SR family of splicing factors. This region probably plays a role in protein-protein interactions (By similarity).</text>
</comment>
<comment type="similarity">
    <text evidence="10">Belongs to the cyclin family. Cyclin L subfamily.</text>
</comment>
<comment type="sequence caution" evidence="10">
    <conflict type="erroneous initiation">
        <sequence resource="EMBL-CDS" id="AAH71622"/>
    </conflict>
</comment>
<comment type="sequence caution" evidence="10">
    <conflict type="erroneous initiation">
        <sequence resource="EMBL-CDS" id="BAB84938"/>
    </conflict>
</comment>